<evidence type="ECO:0000250" key="1">
    <source>
        <dbReference type="UniProtKB" id="Q51725"/>
    </source>
</evidence>
<evidence type="ECO:0000250" key="2">
    <source>
        <dbReference type="UniProtKB" id="Q54240"/>
    </source>
</evidence>
<evidence type="ECO:0000269" key="3">
    <source>
    </source>
</evidence>
<evidence type="ECO:0000269" key="4">
    <source>
    </source>
</evidence>
<evidence type="ECO:0000269" key="5">
    <source>
    </source>
</evidence>
<evidence type="ECO:0000269" key="6">
    <source>
    </source>
</evidence>
<evidence type="ECO:0000269" key="7">
    <source>
    </source>
</evidence>
<evidence type="ECO:0000303" key="8">
    <source>
    </source>
</evidence>
<evidence type="ECO:0000303" key="9">
    <source>
    </source>
</evidence>
<evidence type="ECO:0000305" key="10"/>
<evidence type="ECO:0000312" key="11">
    <source>
        <dbReference type="EMBL" id="AAY95147.1"/>
    </source>
</evidence>
<sequence>MSTLCLPHVMFPQHKITQQQMVDHLENLHADHPRMALAKRMIANTEVNERHLVLPIDELAVHTGFTHRSIVYEREARQMSSAAARQAIENAGLQISDIRMVIVTSCTGFMMPSLTAHLINDLALPTSTVQLPIAQLGCVAGAAAINRANDFARLDARNHVLIVSLEFSSLCYQPDDTKLHAFISAALFGDAVSACVLRADDQAGGFKIKKTESYFLPKSEHYIKYDVKDTGFHFTLDKAVMNSIKDVAPVMERLNYESFEQNCAHNDFFIFHTGGRKILDELVMHLDLASNRVSQSRSSLSEAGNIASVVVFDVLKRQFDSNLNRGDIGLLAAFGPGFTAEMAVGEWTA</sequence>
<comment type="function">
    <text evidence="3 4">Type III polyketide synthase that catalyzes the synthesis of phloroglucinol from three molecules of malonyl-CoA (PubMed:15826166, PubMed:16931521). In addition to its ability to produce phloroglucinol from malonyl-CoA, it exhibits broad substrate specificity, accepting C4-C12 aliphatic acyl-CoAs and phenylacetyl-CoA as the starters to form C6-polyoxoalkylated alpha-pyrones from sequential condensation with malonyl-CoA (PubMed:16931521).</text>
</comment>
<comment type="catalytic activity">
    <reaction evidence="3 4 5">
        <text>3 malonyl-CoA + 3 H(+) = 1,3,5-trihydroxybenzene + 3 CO2 + 3 CoA</text>
        <dbReference type="Rhea" id="RHEA:50380"/>
        <dbReference type="ChEBI" id="CHEBI:15378"/>
        <dbReference type="ChEBI" id="CHEBI:16204"/>
        <dbReference type="ChEBI" id="CHEBI:16526"/>
        <dbReference type="ChEBI" id="CHEBI:57287"/>
        <dbReference type="ChEBI" id="CHEBI:57384"/>
        <dbReference type="EC" id="2.3.1.253"/>
    </reaction>
</comment>
<comment type="biophysicochemical properties">
    <kinetics>
        <KM evidence="3">5.6 uM for malonyl-CoA</KM>
        <KM evidence="4">13 uM for malonyl-CoA</KM>
        <KM evidence="5">13.1 uM for malonyl-CoA</KM>
        <text evidence="3 4 5">kcat is 10 min(-1) with malonyl-CoA as substrate (PubMed:15826166). kcat is 24 min(-1) with malonyl-CoA as substrate (PubMed:16931521). kcat is 7.3 min(-1) with malonyl-CoA as substrate (PubMed:18437267).</text>
    </kinetics>
</comment>
<comment type="pathway">
    <text evidence="1">Antibiotic biosynthesis.</text>
</comment>
<comment type="biotechnology">
    <text evidence="5 6 7">Phloroglucinol is widely used in industry and in the synthesis of pharmaceuticals. PhlD can be used to produce this chemical, however it exhibits low productivity, which is a bottleneck for large-scale application. Different stategies have been developed to improve the stability and the productivity of the enzyme.</text>
</comment>
<comment type="similarity">
    <text evidence="10">Belongs to the thiolase-like superfamily. Chalcone/stilbene synthases family.</text>
</comment>
<accession>Q4K418</accession>
<dbReference type="EC" id="2.3.1.253" evidence="3 4 5"/>
<dbReference type="EMBL" id="CP000076">
    <property type="protein sequence ID" value="AAY95147.1"/>
    <property type="molecule type" value="Genomic_DNA"/>
</dbReference>
<dbReference type="RefSeq" id="WP_011064130.1">
    <property type="nucleotide sequence ID" value="NC_004129.6"/>
</dbReference>
<dbReference type="SMR" id="Q4K418"/>
<dbReference type="STRING" id="220664.PFL_5957"/>
<dbReference type="KEGG" id="pfl:PFL_5957"/>
<dbReference type="PATRIC" id="fig|220664.5.peg.6073"/>
<dbReference type="eggNOG" id="COG3424">
    <property type="taxonomic scope" value="Bacteria"/>
</dbReference>
<dbReference type="HOGENOM" id="CLU_034992_0_0_6"/>
<dbReference type="BioCyc" id="MetaCyc:MONOMER-19911"/>
<dbReference type="BRENDA" id="2.3.1.253">
    <property type="organism ID" value="5121"/>
</dbReference>
<dbReference type="Proteomes" id="UP000008540">
    <property type="component" value="Chromosome"/>
</dbReference>
<dbReference type="GO" id="GO:0034083">
    <property type="term" value="C:type III polyketide synthase complex"/>
    <property type="evidence" value="ECO:0000314"/>
    <property type="project" value="JCVI"/>
</dbReference>
<dbReference type="GO" id="GO:0016747">
    <property type="term" value="F:acyltransferase activity, transferring groups other than amino-acyl groups"/>
    <property type="evidence" value="ECO:0007669"/>
    <property type="project" value="InterPro"/>
</dbReference>
<dbReference type="GO" id="GO:0017000">
    <property type="term" value="P:antibiotic biosynthetic process"/>
    <property type="evidence" value="ECO:0007669"/>
    <property type="project" value="UniProtKB-KW"/>
</dbReference>
<dbReference type="GO" id="GO:0030639">
    <property type="term" value="P:polyketide biosynthetic process"/>
    <property type="evidence" value="ECO:0000314"/>
    <property type="project" value="JCVI"/>
</dbReference>
<dbReference type="CDD" id="cd00831">
    <property type="entry name" value="CHS_like"/>
    <property type="match status" value="1"/>
</dbReference>
<dbReference type="Gene3D" id="3.40.47.10">
    <property type="match status" value="2"/>
</dbReference>
<dbReference type="InterPro" id="IPR012328">
    <property type="entry name" value="Chalcone/stilbene_synt_C"/>
</dbReference>
<dbReference type="InterPro" id="IPR001099">
    <property type="entry name" value="Chalcone/stilbene_synt_N"/>
</dbReference>
<dbReference type="InterPro" id="IPR011141">
    <property type="entry name" value="Polyketide_synthase_type-III"/>
</dbReference>
<dbReference type="InterPro" id="IPR016039">
    <property type="entry name" value="Thiolase-like"/>
</dbReference>
<dbReference type="PANTHER" id="PTHR11877:SF99">
    <property type="entry name" value="1,3,6,8-TETRAHYDROXYNAPHTHALENE SYNTHASE"/>
    <property type="match status" value="1"/>
</dbReference>
<dbReference type="PANTHER" id="PTHR11877">
    <property type="entry name" value="HYDROXYMETHYLGLUTARYL-COA SYNTHASE"/>
    <property type="match status" value="1"/>
</dbReference>
<dbReference type="Pfam" id="PF02797">
    <property type="entry name" value="Chal_sti_synt_C"/>
    <property type="match status" value="1"/>
</dbReference>
<dbReference type="Pfam" id="PF00195">
    <property type="entry name" value="Chal_sti_synt_N"/>
    <property type="match status" value="1"/>
</dbReference>
<dbReference type="PIRSF" id="PIRSF000451">
    <property type="entry name" value="PKS_III"/>
    <property type="match status" value="1"/>
</dbReference>
<dbReference type="SUPFAM" id="SSF53901">
    <property type="entry name" value="Thiolase-like"/>
    <property type="match status" value="2"/>
</dbReference>
<name>PHLD_PSEF5</name>
<protein>
    <recommendedName>
        <fullName evidence="9">Phloroglucinol synthase</fullName>
        <ecNumber evidence="3 4 5">2.3.1.253</ecNumber>
    </recommendedName>
    <alternativeName>
        <fullName evidence="10">Type III polyketide synthase PhlD</fullName>
    </alternativeName>
</protein>
<keyword id="KW-0012">Acyltransferase</keyword>
<keyword id="KW-0045">Antibiotic biosynthesis</keyword>
<keyword id="KW-0808">Transferase</keyword>
<feature type="chain" id="PRO_0000449605" description="Phloroglucinol synthase">
    <location>
        <begin position="1"/>
        <end position="349"/>
    </location>
</feature>
<feature type="active site" evidence="2">
    <location>
        <position position="138"/>
    </location>
</feature>
<feature type="mutagenesis site" description="Does not affect phloroglucinol production but shows 50% decrease in activity toward lauroyl-CoA." evidence="4">
    <original>M</original>
    <variation>I</variation>
    <location>
        <position position="21"/>
    </location>
</feature>
<feature type="mutagenesis site" description="No change in activity toward lauroyl-CoA. 3.8-fold improvement in thermostability. Shows 90% of wild type specific activity." evidence="4 7">
    <original>M</original>
    <variation>T</variation>
    <location>
        <position position="21"/>
    </location>
</feature>
<feature type="mutagenesis site" description="Shows reduced activity toward lauroyl-CoA and decrease in phloroglucinol production." evidence="4">
    <original>H</original>
    <variation>L</variation>
    <location>
        <position position="24"/>
    </location>
</feature>
<feature type="mutagenesis site" description="Does not affect phloroglucinol production but shows 90% decrease in activity toward lauroyl-CoA." evidence="4">
    <original>H</original>
    <variation>V</variation>
    <location>
        <position position="24"/>
    </location>
</feature>
<feature type="mutagenesis site" description="6.5-fold improvement in thermostability. Shows 90% of wild type specific activity." evidence="7">
    <original>N</original>
    <variation>D</variation>
    <location>
        <position position="27"/>
    </location>
</feature>
<feature type="mutagenesis site" description="1.9-fold improvement in thermostability. Shows 110% of wild type specific activity." evidence="7">
    <original>L</original>
    <variation>V</variation>
    <location>
        <position position="54"/>
    </location>
</feature>
<feature type="mutagenesis site" description="Does not affect phloroglucinol production but shows 50% decrease in activity toward lauroyl-CoA." evidence="4">
    <original>L</original>
    <variation>M</variation>
    <location>
        <position position="59"/>
    </location>
</feature>
<feature type="mutagenesis site" description="No change in activity toward lauroyl-CoA." evidence="4">
    <original>A</original>
    <variation>L</variation>
    <location>
        <position position="60"/>
    </location>
</feature>
<feature type="mutagenesis site" description="3.8-fold improvement in thermostability. Shows wild type specific activity." evidence="7">
    <original>A</original>
    <variation>T</variation>
    <location>
        <position position="82"/>
    </location>
</feature>
<feature type="mutagenesis site" description="2.3-fold improvement in thermostability. Shows 80% of wild type specific activity." evidence="7">
    <original>S</original>
    <variation>R</variation>
    <location>
        <position position="96"/>
    </location>
</feature>
<feature type="mutagenesis site" description="2.5-fold improvement in thermostability. Shows 110% of wild type specific activity." evidence="7">
    <original>A</original>
    <variation>S</variation>
    <location>
        <position position="181"/>
    </location>
</feature>
<feature type="mutagenesis site" description="Loss of activity." evidence="4">
    <original>A</original>
    <variation>D</variation>
    <location>
        <position position="185"/>
    </location>
</feature>
<feature type="mutagenesis site" description="2-fold increase in catalytic efficiency." evidence="5">
    <original>K</original>
    <variation>L</variation>
    <location>
        <position position="210"/>
    </location>
</feature>
<feature type="mutagenesis site" description="2-fold increase in catalytic efficiency." evidence="5">
    <original>Y</original>
    <variation>R</variation>
    <location>
        <position position="256"/>
    </location>
</feature>
<feature type="mutagenesis site" description="1.5-fold increase in catalytic efficiency." evidence="5">
    <original>A</original>
    <variation>R</variation>
    <location>
        <position position="289"/>
    </location>
</feature>
<gene>
    <name evidence="8" type="primary">phlD</name>
    <name evidence="11" type="ordered locus">PFL_5957</name>
</gene>
<proteinExistence type="evidence at protein level"/>
<reference key="1">
    <citation type="journal article" date="2005" name="Nat. Biotechnol.">
        <title>Complete genome sequence of the plant commensal Pseudomonas fluorescens Pf-5.</title>
        <authorList>
            <person name="Paulsen I.T."/>
            <person name="Press C.M."/>
            <person name="Ravel J."/>
            <person name="Kobayashi D.Y."/>
            <person name="Myers G.S.A."/>
            <person name="Mavrodi D.V."/>
            <person name="DeBoy R.T."/>
            <person name="Seshadri R."/>
            <person name="Ren Q."/>
            <person name="Madupu R."/>
            <person name="Dodson R.J."/>
            <person name="Durkin A.S."/>
            <person name="Brinkac L.M."/>
            <person name="Daugherty S.C."/>
            <person name="Sullivan S.A."/>
            <person name="Rosovitz M.J."/>
            <person name="Gwinn M.L."/>
            <person name="Zhou L."/>
            <person name="Schneider D.J."/>
            <person name="Cartinhour S.W."/>
            <person name="Nelson W.C."/>
            <person name="Weidman J."/>
            <person name="Watkins K."/>
            <person name="Tran K."/>
            <person name="Khouri H."/>
            <person name="Pierson E.A."/>
            <person name="Pierson L.S. III"/>
            <person name="Thomashow L.S."/>
            <person name="Loper J.E."/>
        </authorList>
    </citation>
    <scope>NUCLEOTIDE SEQUENCE [LARGE SCALE GENOMIC DNA]</scope>
    <source>
        <strain>ATCC BAA-477 / NRRL B-23932 / Pf-5</strain>
    </source>
</reference>
<reference key="2">
    <citation type="journal article" date="2005" name="J. Am. Chem. Soc.">
        <title>Biosynthesis of phloroglucinol.</title>
        <authorList>
            <person name="Achkar J."/>
            <person name="Xian M."/>
            <person name="Zhao H."/>
            <person name="Frost J.W."/>
        </authorList>
    </citation>
    <scope>FUNCTION</scope>
    <scope>CATALYTIC ACTIVITY</scope>
    <scope>BIOPHYSICOCHEMICAL PROPERTIES</scope>
</reference>
<reference key="3">
    <citation type="journal article" date="2006" name="J. Biol. Chem.">
        <title>Characterization of the substrate specificity of PhlD, a type III polyketide synthase from Pseudomonas fluorescens.</title>
        <authorList>
            <person name="Zha W."/>
            <person name="Rubin-Pitel S.B."/>
            <person name="Zhao H."/>
        </authorList>
    </citation>
    <scope>FUNCTION</scope>
    <scope>CATALYTIC ACTIVITY</scope>
    <scope>BIOPHYSICOCHEMICAL PROPERTIES</scope>
    <scope>MUTAGENESIS OF MET-21; HIS-24; LEU-59; ALA-60 AND ALA-185</scope>
    <source>
        <strain>ATCC BAA-477 / NRRL B-23932 / Pf-5</strain>
    </source>
</reference>
<reference key="4">
    <citation type="journal article" date="2008" name="Mol. Biosyst.">
        <title>Exploiting genetic diversity by directed evolution: molecular breeding of type III polyketide synthases improves productivity.</title>
        <authorList>
            <person name="Zha W."/>
            <person name="Rubin-Pitel S.B."/>
            <person name="Zhao H."/>
        </authorList>
    </citation>
    <scope>CATALYTIC ACTIVITY</scope>
    <scope>BIOPHYSICOCHEMICAL PROPERTIES</scope>
    <scope>BIOTECHNOLOGY</scope>
    <scope>MUTAGENESIS OF LYS-210; TYR-256 AND ALA-289</scope>
    <source>
        <strain>ATCC BAA-477 / NRRL B-23932 / Pf-5</strain>
    </source>
</reference>
<reference key="5">
    <citation type="journal article" date="2011" name="Appl. Microbiol. Biotechnol.">
        <title>Improved phloroglucinol production by metabolically engineered Escherichia coli.</title>
        <authorList>
            <person name="Cao Y."/>
            <person name="Jiang X."/>
            <person name="Zhang R."/>
            <person name="Xian M."/>
        </authorList>
    </citation>
    <scope>BIOTECHNOLOGY</scope>
    <source>
        <strain>ATCC BAA-477 / NRRL B-23932 / Pf-5</strain>
    </source>
</reference>
<reference key="6">
    <citation type="journal article" date="2013" name="Appl. Microbiol. Biotechnol.">
        <title>Directed evolution of phloroglucinol synthase PhlD with increased stability for phloroglucinol production.</title>
        <authorList>
            <person name="Rao G."/>
            <person name="Lee J.K."/>
            <person name="Zhao H."/>
        </authorList>
    </citation>
    <scope>BIOTECHNOLOGY</scope>
    <scope>MUTAGENESIS OF MET-21; ASN-27; LEU-54; ALA-82; SER-96 AND ALA-181</scope>
</reference>
<organism>
    <name type="scientific">Pseudomonas fluorescens (strain ATCC BAA-477 / NRRL B-23932 / Pf-5)</name>
    <dbReference type="NCBI Taxonomy" id="220664"/>
    <lineage>
        <taxon>Bacteria</taxon>
        <taxon>Pseudomonadati</taxon>
        <taxon>Pseudomonadota</taxon>
        <taxon>Gammaproteobacteria</taxon>
        <taxon>Pseudomonadales</taxon>
        <taxon>Pseudomonadaceae</taxon>
        <taxon>Pseudomonas</taxon>
    </lineage>
</organism>